<proteinExistence type="inferred from homology"/>
<accession>B8CH76</accession>
<evidence type="ECO:0000255" key="1">
    <source>
        <dbReference type="HAMAP-Rule" id="MF_00255"/>
    </source>
</evidence>
<reference key="1">
    <citation type="journal article" date="2008" name="PLoS ONE">
        <title>Environmental adaptation: genomic analysis of the piezotolerant and psychrotolerant deep-sea iron reducing bacterium Shewanella piezotolerans WP3.</title>
        <authorList>
            <person name="Wang F."/>
            <person name="Wang J."/>
            <person name="Jian H."/>
            <person name="Zhang B."/>
            <person name="Li S."/>
            <person name="Wang F."/>
            <person name="Zeng X."/>
            <person name="Gao L."/>
            <person name="Bartlett D.H."/>
            <person name="Yu J."/>
            <person name="Hu S."/>
            <person name="Xiao X."/>
        </authorList>
    </citation>
    <scope>NUCLEOTIDE SEQUENCE [LARGE SCALE GENOMIC DNA]</scope>
    <source>
        <strain>WP3 / JCM 13877</strain>
    </source>
</reference>
<dbReference type="EC" id="6.1.1.14" evidence="1"/>
<dbReference type="EMBL" id="CP000472">
    <property type="protein sequence ID" value="ACJ26868.1"/>
    <property type="molecule type" value="Genomic_DNA"/>
</dbReference>
<dbReference type="RefSeq" id="WP_020910252.1">
    <property type="nucleotide sequence ID" value="NC_011566.1"/>
</dbReference>
<dbReference type="SMR" id="B8CH76"/>
<dbReference type="STRING" id="225849.swp_0020"/>
<dbReference type="KEGG" id="swp:swp_0020"/>
<dbReference type="eggNOG" id="COG0751">
    <property type="taxonomic scope" value="Bacteria"/>
</dbReference>
<dbReference type="HOGENOM" id="CLU_007220_2_2_6"/>
<dbReference type="OrthoDB" id="9775440at2"/>
<dbReference type="Proteomes" id="UP000000753">
    <property type="component" value="Chromosome"/>
</dbReference>
<dbReference type="GO" id="GO:0005829">
    <property type="term" value="C:cytosol"/>
    <property type="evidence" value="ECO:0007669"/>
    <property type="project" value="TreeGrafter"/>
</dbReference>
<dbReference type="GO" id="GO:0004814">
    <property type="term" value="F:arginine-tRNA ligase activity"/>
    <property type="evidence" value="ECO:0007669"/>
    <property type="project" value="InterPro"/>
</dbReference>
<dbReference type="GO" id="GO:0005524">
    <property type="term" value="F:ATP binding"/>
    <property type="evidence" value="ECO:0007669"/>
    <property type="project" value="UniProtKB-UniRule"/>
</dbReference>
<dbReference type="GO" id="GO:0004820">
    <property type="term" value="F:glycine-tRNA ligase activity"/>
    <property type="evidence" value="ECO:0007669"/>
    <property type="project" value="UniProtKB-UniRule"/>
</dbReference>
<dbReference type="GO" id="GO:0006420">
    <property type="term" value="P:arginyl-tRNA aminoacylation"/>
    <property type="evidence" value="ECO:0007669"/>
    <property type="project" value="InterPro"/>
</dbReference>
<dbReference type="GO" id="GO:0006426">
    <property type="term" value="P:glycyl-tRNA aminoacylation"/>
    <property type="evidence" value="ECO:0007669"/>
    <property type="project" value="UniProtKB-UniRule"/>
</dbReference>
<dbReference type="HAMAP" id="MF_00255">
    <property type="entry name" value="Gly_tRNA_synth_beta"/>
    <property type="match status" value="1"/>
</dbReference>
<dbReference type="InterPro" id="IPR008909">
    <property type="entry name" value="DALR_anticod-bd"/>
</dbReference>
<dbReference type="InterPro" id="IPR015944">
    <property type="entry name" value="Gly-tRNA-synth_bsu"/>
</dbReference>
<dbReference type="InterPro" id="IPR006194">
    <property type="entry name" value="Gly-tRNA-synth_heterodimer"/>
</dbReference>
<dbReference type="NCBIfam" id="TIGR00211">
    <property type="entry name" value="glyS"/>
    <property type="match status" value="1"/>
</dbReference>
<dbReference type="PANTHER" id="PTHR30075:SF2">
    <property type="entry name" value="GLYCINE--TRNA LIGASE, CHLOROPLASTIC_MITOCHONDRIAL 2"/>
    <property type="match status" value="1"/>
</dbReference>
<dbReference type="PANTHER" id="PTHR30075">
    <property type="entry name" value="GLYCYL-TRNA SYNTHETASE"/>
    <property type="match status" value="1"/>
</dbReference>
<dbReference type="Pfam" id="PF05746">
    <property type="entry name" value="DALR_1"/>
    <property type="match status" value="1"/>
</dbReference>
<dbReference type="Pfam" id="PF02092">
    <property type="entry name" value="tRNA_synt_2f"/>
    <property type="match status" value="1"/>
</dbReference>
<dbReference type="PRINTS" id="PR01045">
    <property type="entry name" value="TRNASYNTHGB"/>
</dbReference>
<dbReference type="SMART" id="SM00836">
    <property type="entry name" value="DALR_1"/>
    <property type="match status" value="1"/>
</dbReference>
<dbReference type="SUPFAM" id="SSF109604">
    <property type="entry name" value="HD-domain/PDEase-like"/>
    <property type="match status" value="1"/>
</dbReference>
<dbReference type="PROSITE" id="PS50861">
    <property type="entry name" value="AA_TRNA_LIGASE_II_GLYAB"/>
    <property type="match status" value="1"/>
</dbReference>
<name>SYGB_SHEPW</name>
<feature type="chain" id="PRO_1000197216" description="Glycine--tRNA ligase beta subunit">
    <location>
        <begin position="1"/>
        <end position="689"/>
    </location>
</feature>
<protein>
    <recommendedName>
        <fullName evidence="1">Glycine--tRNA ligase beta subunit</fullName>
        <ecNumber evidence="1">6.1.1.14</ecNumber>
    </recommendedName>
    <alternativeName>
        <fullName evidence="1">Glycyl-tRNA synthetase beta subunit</fullName>
        <shortName evidence="1">GlyRS</shortName>
    </alternativeName>
</protein>
<gene>
    <name evidence="1" type="primary">glyS</name>
    <name type="ordered locus">swp_0020</name>
</gene>
<keyword id="KW-0030">Aminoacyl-tRNA synthetase</keyword>
<keyword id="KW-0067">ATP-binding</keyword>
<keyword id="KW-0963">Cytoplasm</keyword>
<keyword id="KW-0436">Ligase</keyword>
<keyword id="KW-0547">Nucleotide-binding</keyword>
<keyword id="KW-0648">Protein biosynthesis</keyword>
<sequence length="689" mass="75447">MNFENLLIEVGTEELPPKSLRKLAESFLNNFTDELKKAELTFESAVWHAAPRRLAINVNQLALAQADKVVEKRGPAVAQAFDADGNPTKAAMGWARGNGITVEQADRLKTDKGEWLLHQAKVVGVETKSLIAAMAQRSLDKLPIPKPMRWGSNTTQFIRPVHTVTMLLGSEVVEGELLGIKSDRIIRGHRFMGKPSIELDHADNYLSVLKEQGKVDANYEARKAQIKADAEAAAAKLGGVADLEDDLLEEVTSLVEWPVVLTASFEEKFLDVPAEALVYTMKGDQKYFPVFDDAGQLLPNFIFVTNIESKDPQQIISGNEKVVRPRLADAEFFFETDKKNSLESRLSSLETVVFQKQLGTIKQRVERISAMAAYIATSIGANSEEAARAGLLSKSDLMTNMVMEFTDLQGTMGMHYARLNGETEAVAVALSEQYKPKFSGDTVPTAPVSICVALAEKLDTLVGIFGIGQAPKGAADPFALRRAAIGVLRICLENNLPLDLVDLIAKAQELHGENLTNDKAPEQVLEFFMGRFRAWYQDQGISVDVILAVLARRPTAPADFESRIKAVAHFRTLEQALALAAANKRVSNILAKVEGELPATIDEALLVEAAEKALAAKLAELQPQLAPLFAAANYQEALALLASLRESVDTFFEDVMVMADDEALKNNRLALLSSLRDQFLHAADISLLQ</sequence>
<comment type="catalytic activity">
    <reaction evidence="1">
        <text>tRNA(Gly) + glycine + ATP = glycyl-tRNA(Gly) + AMP + diphosphate</text>
        <dbReference type="Rhea" id="RHEA:16013"/>
        <dbReference type="Rhea" id="RHEA-COMP:9664"/>
        <dbReference type="Rhea" id="RHEA-COMP:9683"/>
        <dbReference type="ChEBI" id="CHEBI:30616"/>
        <dbReference type="ChEBI" id="CHEBI:33019"/>
        <dbReference type="ChEBI" id="CHEBI:57305"/>
        <dbReference type="ChEBI" id="CHEBI:78442"/>
        <dbReference type="ChEBI" id="CHEBI:78522"/>
        <dbReference type="ChEBI" id="CHEBI:456215"/>
        <dbReference type="EC" id="6.1.1.14"/>
    </reaction>
</comment>
<comment type="subunit">
    <text evidence="1">Tetramer of two alpha and two beta subunits.</text>
</comment>
<comment type="subcellular location">
    <subcellularLocation>
        <location evidence="1">Cytoplasm</location>
    </subcellularLocation>
</comment>
<comment type="similarity">
    <text evidence="1">Belongs to the class-II aminoacyl-tRNA synthetase family.</text>
</comment>
<organism>
    <name type="scientific">Shewanella piezotolerans (strain WP3 / JCM 13877)</name>
    <dbReference type="NCBI Taxonomy" id="225849"/>
    <lineage>
        <taxon>Bacteria</taxon>
        <taxon>Pseudomonadati</taxon>
        <taxon>Pseudomonadota</taxon>
        <taxon>Gammaproteobacteria</taxon>
        <taxon>Alteromonadales</taxon>
        <taxon>Shewanellaceae</taxon>
        <taxon>Shewanella</taxon>
    </lineage>
</organism>